<name>LTK_MOUSE</name>
<comment type="function">
    <text evidence="2 3">Receptor with a tyrosine-protein kinase activity. Following activation by ALKAL1 or ALKAL2 ligands at the cell surface, transduces an extracellular signal into an intracellular response. Ligand-binding to the extracellular domain induces tyrosine kinase activation, leading to activation of the mitogen-activated protein kinase (MAPK) pathway (By similarity). Phosphorylates almost exclusively at the first tyrosine of the Y-x-x-x-Y-Y motif (By similarity). The exact function of this protein is not known; studies with chimeric proteins demonstrate its ability to promote growth and specifically neurite outgrowth, and cell survival. Involved in regulation of the secretory pathway involving endoplasmic reticulum (ER) export sites (ERESs) and ER to Golgi transport (By similarity).</text>
</comment>
<comment type="catalytic activity">
    <reaction evidence="2 6">
        <text>L-tyrosyl-[protein] + ATP = O-phospho-L-tyrosyl-[protein] + ADP + H(+)</text>
        <dbReference type="Rhea" id="RHEA:10596"/>
        <dbReference type="Rhea" id="RHEA-COMP:10136"/>
        <dbReference type="Rhea" id="RHEA-COMP:20101"/>
        <dbReference type="ChEBI" id="CHEBI:15378"/>
        <dbReference type="ChEBI" id="CHEBI:30616"/>
        <dbReference type="ChEBI" id="CHEBI:46858"/>
        <dbReference type="ChEBI" id="CHEBI:61978"/>
        <dbReference type="ChEBI" id="CHEBI:456216"/>
        <dbReference type="EC" id="2.7.10.1"/>
    </reaction>
</comment>
<comment type="activity regulation">
    <text evidence="3">Activated by ligand-binding, leading to homodimerization and autophosphorylation.</text>
</comment>
<comment type="subunit">
    <text evidence="2">Homodimer; homodimerizes following ligand-binding. Part of a complex including LTK, TNK2 and GRB2, in which GRB2 promotes LTK recruitment by TNK2.</text>
</comment>
<comment type="subcellular location">
    <subcellularLocation>
        <location evidence="11 12">Cell membrane</location>
        <topology evidence="4">Single-pass type I membrane protein</topology>
    </subcellularLocation>
</comment>
<comment type="subcellular location">
    <molecule>Isoform A</molecule>
    <subcellularLocation>
        <location evidence="18">Endoplasmic reticulum</location>
    </subcellularLocation>
    <text evidence="18">Retained in the endoplasmic reticulum.</text>
</comment>
<comment type="subcellular location">
    <molecule>Isoform B</molecule>
    <subcellularLocation>
        <location evidence="18">Endoplasmic reticulum</location>
    </subcellularLocation>
    <text evidence="18">Retained in the endoplasmic reticulum.</text>
</comment>
<comment type="alternative products">
    <event type="alternative promoter"/>
    <event type="alternative splicing"/>
    <isoform>
        <id>P08923-1</id>
        <name evidence="16">D</name>
        <sequence type="displayed"/>
    </isoform>
    <isoform>
        <id>P08923-2</id>
        <name evidence="16">A</name>
        <sequence type="described" ref="VSP_002950 VSP_002951 VSP_002952"/>
    </isoform>
    <isoform>
        <id>P08923-3</id>
        <name evidence="16">B</name>
        <sequence type="described" ref="VSP_002950 VSP_002951"/>
    </isoform>
    <isoform>
        <id>P08923-4</id>
        <name evidence="16">C</name>
        <sequence type="described" ref="VSP_002952"/>
    </isoform>
    <text>Additional isoforms seem to exist.</text>
</comment>
<comment type="tissue specificity">
    <text evidence="10">Subsets of lymphoid and neuronal cells.</text>
</comment>
<comment type="PTM">
    <text evidence="2">Phosphorylated at tyrosine residues by autocatalysis, which activates kinase activity.</text>
</comment>
<comment type="disruption phenotype">
    <text evidence="9">Mice do not show any decrease in newborn neurons (PubMed:22079349). Mice lacking both Alk and Ltk show a strong reduction in newborn neurons (PubMed:22079349).</text>
</comment>
<comment type="miscellaneous">
    <molecule>Isoform D</molecule>
    <text>May be produced by alternative promoter usage.</text>
</comment>
<comment type="miscellaneous">
    <molecule>Isoform A</molecule>
    <text evidence="17">May be produced by alternative promoter usage. Starts at a CUG codon.</text>
</comment>
<comment type="miscellaneous">
    <molecule>Isoform B</molecule>
    <text evidence="17">May be produced by alternative promoter usage. Starts at a CUG codon.</text>
</comment>
<comment type="similarity">
    <text evidence="5">Belongs to the protein kinase superfamily. Tyr protein kinase family. Insulin receptor subfamily.</text>
</comment>
<comment type="sequence caution" evidence="17">
    <conflict type="erroneous initiation">
        <sequence resource="EMBL-CDS" id="CAA30793"/>
    </conflict>
    <text>Truncated N-terminus.</text>
</comment>
<dbReference type="EC" id="2.7.10.1" evidence="2 6"/>
<dbReference type="EMBL" id="X52621">
    <property type="protein sequence ID" value="CAA36848.1"/>
    <property type="molecule type" value="mRNA"/>
</dbReference>
<dbReference type="EMBL" id="M90470">
    <property type="protein sequence ID" value="AAA39451.1"/>
    <property type="molecule type" value="mRNA"/>
</dbReference>
<dbReference type="EMBL" id="AL844536">
    <property type="status" value="NOT_ANNOTATED_CDS"/>
    <property type="molecule type" value="Genomic_DNA"/>
</dbReference>
<dbReference type="EMBL" id="X07984">
    <property type="protein sequence ID" value="CAA30793.1"/>
    <property type="status" value="ALT_INIT"/>
    <property type="molecule type" value="mRNA"/>
</dbReference>
<dbReference type="CCDS" id="CCDS16608.1">
    <molecule id="P08923-1"/>
</dbReference>
<dbReference type="CCDS" id="CCDS16609.1">
    <molecule id="P08923-4"/>
</dbReference>
<dbReference type="CCDS" id="CCDS50674.1">
    <molecule id="P08923-2"/>
</dbReference>
<dbReference type="PIR" id="I58378">
    <property type="entry name" value="I58378"/>
</dbReference>
<dbReference type="PIR" id="S12792">
    <property type="entry name" value="S12792"/>
</dbReference>
<dbReference type="RefSeq" id="NP_976220.2">
    <molecule id="P08923-1"/>
    <property type="nucleotide sequence ID" value="NM_203345.2"/>
</dbReference>
<dbReference type="RefSeq" id="NP_996824.1">
    <molecule id="P08923-3"/>
    <property type="nucleotide sequence ID" value="NM_206941.1"/>
</dbReference>
<dbReference type="RefSeq" id="NP_996825.2">
    <molecule id="P08923-4"/>
    <property type="nucleotide sequence ID" value="NM_206942.2"/>
</dbReference>
<dbReference type="SMR" id="P08923"/>
<dbReference type="FunCoup" id="P08923">
    <property type="interactions" value="13"/>
</dbReference>
<dbReference type="STRING" id="10090.ENSMUSP00000028759"/>
<dbReference type="GlyCosmos" id="P08923">
    <property type="glycosylation" value="2 sites, No reported glycans"/>
</dbReference>
<dbReference type="GlyGen" id="P08923">
    <property type="glycosylation" value="3 sites"/>
</dbReference>
<dbReference type="iPTMnet" id="P08923"/>
<dbReference type="PhosphoSitePlus" id="P08923"/>
<dbReference type="jPOST" id="P08923"/>
<dbReference type="PaxDb" id="10090-ENSMUSP00000028759"/>
<dbReference type="Antibodypedia" id="23318">
    <property type="antibodies" value="300 antibodies from 32 providers"/>
</dbReference>
<dbReference type="DNASU" id="17005"/>
<dbReference type="Ensembl" id="ENSMUST00000028759.13">
    <molecule id="P08923-1"/>
    <property type="protein sequence ID" value="ENSMUSP00000028759.7"/>
    <property type="gene ID" value="ENSMUSG00000027297.16"/>
</dbReference>
<dbReference type="Ensembl" id="ENSMUST00000082130.13">
    <molecule id="P08923-4"/>
    <property type="protein sequence ID" value="ENSMUSP00000080774.7"/>
    <property type="gene ID" value="ENSMUSG00000027297.16"/>
</dbReference>
<dbReference type="GeneID" id="17005"/>
<dbReference type="KEGG" id="mmu:17005"/>
<dbReference type="UCSC" id="uc008lug.1">
    <molecule id="P08923-3"/>
    <property type="organism name" value="mouse"/>
</dbReference>
<dbReference type="UCSC" id="uc008lui.1">
    <molecule id="P08923-1"/>
    <property type="organism name" value="mouse"/>
</dbReference>
<dbReference type="UCSC" id="uc008luj.1">
    <molecule id="P08923-4"/>
    <property type="organism name" value="mouse"/>
</dbReference>
<dbReference type="AGR" id="MGI:96840"/>
<dbReference type="CTD" id="4058"/>
<dbReference type="MGI" id="MGI:96840">
    <property type="gene designation" value="Ltk"/>
</dbReference>
<dbReference type="VEuPathDB" id="HostDB:ENSMUSG00000027297"/>
<dbReference type="eggNOG" id="KOG1095">
    <property type="taxonomic scope" value="Eukaryota"/>
</dbReference>
<dbReference type="GeneTree" id="ENSGT00940000162680"/>
<dbReference type="InParanoid" id="P08923"/>
<dbReference type="OMA" id="WPFGLPE"/>
<dbReference type="OrthoDB" id="65481at2759"/>
<dbReference type="PhylomeDB" id="P08923"/>
<dbReference type="TreeFam" id="TF351636"/>
<dbReference type="BRENDA" id="2.7.10.1">
    <property type="organism ID" value="3474"/>
</dbReference>
<dbReference type="Reactome" id="R-MMU-9842663">
    <property type="pathway name" value="Signaling by LTK"/>
</dbReference>
<dbReference type="BioGRID-ORCS" id="17005">
    <property type="hits" value="2 hits in 81 CRISPR screens"/>
</dbReference>
<dbReference type="PRO" id="PR:P08923"/>
<dbReference type="Proteomes" id="UP000000589">
    <property type="component" value="Chromosome 2"/>
</dbReference>
<dbReference type="RNAct" id="P08923">
    <property type="molecule type" value="protein"/>
</dbReference>
<dbReference type="Bgee" id="ENSMUSG00000027297">
    <property type="expression patterns" value="Expressed in perirhinal cortex and 88 other cell types or tissues"/>
</dbReference>
<dbReference type="ExpressionAtlas" id="P08923">
    <property type="expression patterns" value="baseline and differential"/>
</dbReference>
<dbReference type="GO" id="GO:0005783">
    <property type="term" value="C:endoplasmic reticulum"/>
    <property type="evidence" value="ECO:0007669"/>
    <property type="project" value="UniProtKB-SubCell"/>
</dbReference>
<dbReference type="GO" id="GO:0016020">
    <property type="term" value="C:membrane"/>
    <property type="evidence" value="ECO:0000314"/>
    <property type="project" value="MGI"/>
</dbReference>
<dbReference type="GO" id="GO:0005886">
    <property type="term" value="C:plasma membrane"/>
    <property type="evidence" value="ECO:0007669"/>
    <property type="project" value="UniProtKB-SubCell"/>
</dbReference>
<dbReference type="GO" id="GO:0005524">
    <property type="term" value="F:ATP binding"/>
    <property type="evidence" value="ECO:0007669"/>
    <property type="project" value="UniProtKB-KW"/>
</dbReference>
<dbReference type="GO" id="GO:0004672">
    <property type="term" value="F:protein kinase activity"/>
    <property type="evidence" value="ECO:0000250"/>
    <property type="project" value="UniProtKB"/>
</dbReference>
<dbReference type="GO" id="GO:0030298">
    <property type="term" value="F:receptor signaling protein tyrosine kinase activator activity"/>
    <property type="evidence" value="ECO:0000250"/>
    <property type="project" value="UniProtKB"/>
</dbReference>
<dbReference type="GO" id="GO:0004714">
    <property type="term" value="F:transmembrane receptor protein tyrosine kinase activity"/>
    <property type="evidence" value="ECO:0007669"/>
    <property type="project" value="UniProtKB-EC"/>
</dbReference>
<dbReference type="GO" id="GO:0008283">
    <property type="term" value="P:cell population proliferation"/>
    <property type="evidence" value="ECO:0000250"/>
    <property type="project" value="UniProtKB"/>
</dbReference>
<dbReference type="GO" id="GO:0007169">
    <property type="term" value="P:cell surface receptor protein tyrosine kinase signaling pathway"/>
    <property type="evidence" value="ECO:0007669"/>
    <property type="project" value="Ensembl"/>
</dbReference>
<dbReference type="GO" id="GO:0071300">
    <property type="term" value="P:cellular response to retinoic acid"/>
    <property type="evidence" value="ECO:0007669"/>
    <property type="project" value="Ensembl"/>
</dbReference>
<dbReference type="GO" id="GO:0043066">
    <property type="term" value="P:negative regulation of apoptotic process"/>
    <property type="evidence" value="ECO:0000250"/>
    <property type="project" value="UniProtKB"/>
</dbReference>
<dbReference type="GO" id="GO:0038083">
    <property type="term" value="P:peptidyl-tyrosine autophosphorylation"/>
    <property type="evidence" value="ECO:0000250"/>
    <property type="project" value="UniProtKB"/>
</dbReference>
<dbReference type="GO" id="GO:0010666">
    <property type="term" value="P:positive regulation of cardiac muscle cell apoptotic process"/>
    <property type="evidence" value="ECO:0007669"/>
    <property type="project" value="Ensembl"/>
</dbReference>
<dbReference type="GO" id="GO:0010976">
    <property type="term" value="P:positive regulation of neuron projection development"/>
    <property type="evidence" value="ECO:0007669"/>
    <property type="project" value="Ensembl"/>
</dbReference>
<dbReference type="GO" id="GO:0051897">
    <property type="term" value="P:positive regulation of phosphatidylinositol 3-kinase/protein kinase B signal transduction"/>
    <property type="evidence" value="ECO:0000250"/>
    <property type="project" value="UniProtKB"/>
</dbReference>
<dbReference type="CDD" id="cd05036">
    <property type="entry name" value="PTKc_ALK_LTK"/>
    <property type="match status" value="1"/>
</dbReference>
<dbReference type="FunFam" id="1.10.510.10:FF:000113">
    <property type="entry name" value="Tyrosine-protein kinase receptor"/>
    <property type="match status" value="1"/>
</dbReference>
<dbReference type="FunFam" id="3.30.200.20:FF:000117">
    <property type="entry name" value="Tyrosine-protein kinase receptor"/>
    <property type="match status" value="1"/>
</dbReference>
<dbReference type="Gene3D" id="3.30.200.20">
    <property type="entry name" value="Phosphorylase Kinase, domain 1"/>
    <property type="match status" value="1"/>
</dbReference>
<dbReference type="Gene3D" id="1.10.510.10">
    <property type="entry name" value="Transferase(Phosphotransferase) domain 1"/>
    <property type="match status" value="1"/>
</dbReference>
<dbReference type="InterPro" id="IPR055163">
    <property type="entry name" value="ALK/LTK-like_GRD"/>
</dbReference>
<dbReference type="InterPro" id="IPR011009">
    <property type="entry name" value="Kinase-like_dom_sf"/>
</dbReference>
<dbReference type="InterPro" id="IPR000719">
    <property type="entry name" value="Prot_kinase_dom"/>
</dbReference>
<dbReference type="InterPro" id="IPR017441">
    <property type="entry name" value="Protein_kinase_ATP_BS"/>
</dbReference>
<dbReference type="InterPro" id="IPR050122">
    <property type="entry name" value="RTK"/>
</dbReference>
<dbReference type="InterPro" id="IPR001245">
    <property type="entry name" value="Ser-Thr/Tyr_kinase_cat_dom"/>
</dbReference>
<dbReference type="InterPro" id="IPR008266">
    <property type="entry name" value="Tyr_kinase_AS"/>
</dbReference>
<dbReference type="InterPro" id="IPR020635">
    <property type="entry name" value="Tyr_kinase_cat_dom"/>
</dbReference>
<dbReference type="InterPro" id="IPR002011">
    <property type="entry name" value="Tyr_kinase_rcpt_2_CS"/>
</dbReference>
<dbReference type="PANTHER" id="PTHR24416:SF294">
    <property type="entry name" value="LEUKOCYTE TYROSINE KINASE RECEPTOR"/>
    <property type="match status" value="1"/>
</dbReference>
<dbReference type="PANTHER" id="PTHR24416">
    <property type="entry name" value="TYROSINE-PROTEIN KINASE RECEPTOR"/>
    <property type="match status" value="1"/>
</dbReference>
<dbReference type="Pfam" id="PF12810">
    <property type="entry name" value="ALK_LTK_GRD"/>
    <property type="match status" value="1"/>
</dbReference>
<dbReference type="Pfam" id="PF07714">
    <property type="entry name" value="PK_Tyr_Ser-Thr"/>
    <property type="match status" value="1"/>
</dbReference>
<dbReference type="PRINTS" id="PR00109">
    <property type="entry name" value="TYRKINASE"/>
</dbReference>
<dbReference type="SMART" id="SM00219">
    <property type="entry name" value="TyrKc"/>
    <property type="match status" value="1"/>
</dbReference>
<dbReference type="SUPFAM" id="SSF56112">
    <property type="entry name" value="Protein kinase-like (PK-like)"/>
    <property type="match status" value="1"/>
</dbReference>
<dbReference type="PROSITE" id="PS00107">
    <property type="entry name" value="PROTEIN_KINASE_ATP"/>
    <property type="match status" value="1"/>
</dbReference>
<dbReference type="PROSITE" id="PS50011">
    <property type="entry name" value="PROTEIN_KINASE_DOM"/>
    <property type="match status" value="1"/>
</dbReference>
<dbReference type="PROSITE" id="PS00109">
    <property type="entry name" value="PROTEIN_KINASE_TYR"/>
    <property type="match status" value="1"/>
</dbReference>
<dbReference type="PROSITE" id="PS00239">
    <property type="entry name" value="RECEPTOR_TYR_KIN_II"/>
    <property type="match status" value="1"/>
</dbReference>
<protein>
    <recommendedName>
        <fullName evidence="14">Leukocyte tyrosine kinase receptor</fullName>
        <ecNumber evidence="2 6">2.7.10.1</ecNumber>
    </recommendedName>
</protein>
<organism>
    <name type="scientific">Mus musculus</name>
    <name type="common">Mouse</name>
    <dbReference type="NCBI Taxonomy" id="10090"/>
    <lineage>
        <taxon>Eukaryota</taxon>
        <taxon>Metazoa</taxon>
        <taxon>Chordata</taxon>
        <taxon>Craniata</taxon>
        <taxon>Vertebrata</taxon>
        <taxon>Euteleostomi</taxon>
        <taxon>Mammalia</taxon>
        <taxon>Eutheria</taxon>
        <taxon>Euarchontoglires</taxon>
        <taxon>Glires</taxon>
        <taxon>Rodentia</taxon>
        <taxon>Myomorpha</taxon>
        <taxon>Muroidea</taxon>
        <taxon>Muridae</taxon>
        <taxon>Murinae</taxon>
        <taxon>Mus</taxon>
        <taxon>Mus</taxon>
    </lineage>
</organism>
<evidence type="ECO:0000250" key="1"/>
<evidence type="ECO:0000250" key="2">
    <source>
        <dbReference type="UniProtKB" id="P29376"/>
    </source>
</evidence>
<evidence type="ECO:0000250" key="3">
    <source>
        <dbReference type="UniProtKB" id="Q9UM73"/>
    </source>
</evidence>
<evidence type="ECO:0000255" key="4"/>
<evidence type="ECO:0000255" key="5">
    <source>
        <dbReference type="PROSITE-ProRule" id="PRU00159"/>
    </source>
</evidence>
<evidence type="ECO:0000255" key="6">
    <source>
        <dbReference type="PROSITE-ProRule" id="PRU10028"/>
    </source>
</evidence>
<evidence type="ECO:0000256" key="7">
    <source>
        <dbReference type="SAM" id="MobiDB-lite"/>
    </source>
</evidence>
<evidence type="ECO:0000269" key="8">
    <source>
    </source>
</evidence>
<evidence type="ECO:0000269" key="9">
    <source>
    </source>
</evidence>
<evidence type="ECO:0000269" key="10">
    <source>
    </source>
</evidence>
<evidence type="ECO:0000269" key="11">
    <source>
    </source>
</evidence>
<evidence type="ECO:0000269" key="12">
    <source>
    </source>
</evidence>
<evidence type="ECO:0000303" key="13">
    <source>
    </source>
</evidence>
<evidence type="ECO:0000303" key="14">
    <source>
    </source>
</evidence>
<evidence type="ECO:0000303" key="15">
    <source>
    </source>
</evidence>
<evidence type="ECO:0000303" key="16">
    <source>
    </source>
</evidence>
<evidence type="ECO:0000305" key="17"/>
<evidence type="ECO:0000305" key="18">
    <source>
    </source>
</evidence>
<gene>
    <name evidence="14" type="primary">Ltk</name>
</gene>
<reference key="1">
    <citation type="journal article" date="1990" name="EMBO J.">
        <title>The ltk receptor tyrosine kinase is expressed in pre-B lymphocytes and cerebral neurons and uses a non-AUG translational initiator.</title>
        <authorList>
            <person name="Bernards A."/>
            <person name="de la Monte S."/>
        </authorList>
    </citation>
    <scope>NUCLEOTIDE SEQUENCE [MRNA] (ISOFORM A)</scope>
    <scope>TISSUE SPECIFICITY</scope>
    <source>
        <strain>BALB/cJ</strain>
    </source>
</reference>
<reference key="2">
    <citation type="journal article" date="1991" name="Oncogene">
        <title>Alternatively spliced ltk mRNA in neurons predicts a receptor with a larger putative extracellular domain.</title>
        <authorList>
            <person name="Haase V.H."/>
            <person name="Snijders A.J."/>
            <person name="Cooke S.M."/>
            <person name="Teng M.N."/>
            <person name="Kaul D."/>
            <person name="le Beau M.M."/>
            <person name="Bruns G.A."/>
            <person name="Bernards A."/>
        </authorList>
    </citation>
    <scope>NUCLEOTIDE SEQUENCE [MRNA] (ISOFORM A)</scope>
    <source>
        <strain>BALB/cJ</strain>
    </source>
</reference>
<reference key="3">
    <citation type="journal article" date="1993" name="Oncogene">
        <title>Four tissue-specific mouse ltk mRNAs predict tyrosine kinases that differ upstream of their transmembrane segment.</title>
        <authorList>
            <person name="Snijders A.J."/>
            <person name="Haase V.H."/>
            <person name="Bernards A."/>
        </authorList>
    </citation>
    <scope>NUCLEOTIDE SEQUENCE [MRNA] (ISOFORMS A; B; C AND D)</scope>
    <scope>SUBCELLULAR LOCATION</scope>
</reference>
<reference key="4">
    <citation type="journal article" date="2009" name="PLoS Biol.">
        <title>Lineage-specific biology revealed by a finished genome assembly of the mouse.</title>
        <authorList>
            <person name="Church D.M."/>
            <person name="Goodstadt L."/>
            <person name="Hillier L.W."/>
            <person name="Zody M.C."/>
            <person name="Goldstein S."/>
            <person name="She X."/>
            <person name="Bult C.J."/>
            <person name="Agarwala R."/>
            <person name="Cherry J.L."/>
            <person name="DiCuccio M."/>
            <person name="Hlavina W."/>
            <person name="Kapustin Y."/>
            <person name="Meric P."/>
            <person name="Maglott D."/>
            <person name="Birtle Z."/>
            <person name="Marques A.C."/>
            <person name="Graves T."/>
            <person name="Zhou S."/>
            <person name="Teague B."/>
            <person name="Potamousis K."/>
            <person name="Churas C."/>
            <person name="Place M."/>
            <person name="Herschleb J."/>
            <person name="Runnheim R."/>
            <person name="Forrest D."/>
            <person name="Amos-Landgraf J."/>
            <person name="Schwartz D.C."/>
            <person name="Cheng Z."/>
            <person name="Lindblad-Toh K."/>
            <person name="Eichler E.E."/>
            <person name="Ponting C.P."/>
        </authorList>
    </citation>
    <scope>NUCLEOTIDE SEQUENCE [LARGE SCALE GENOMIC DNA]</scope>
    <source>
        <strain>C57BL/6J</strain>
    </source>
</reference>
<reference key="5">
    <citation type="journal article" date="1988" name="Nature">
        <title>Leukocytes express a novel gene encoding a putative transmembrane protein-kinase devoid of an extracellular domain.</title>
        <authorList>
            <person name="Ben-Neriah Y."/>
            <person name="Bauskin A.R."/>
        </authorList>
    </citation>
    <scope>NUCLEOTIDE SEQUENCE [MRNA] OF 260-888 (ISOFORM A)</scope>
    <scope>SUBCELLULAR LOCATION</scope>
</reference>
<reference key="6">
    <citation type="journal article" date="1997" name="J. Biol. Chem.">
        <title>A lymphocyte-specific Ltk tyrosine kinase isoform is retained in the endoplasmic reticulum in association with calnexin.</title>
        <authorList>
            <person name="Snijders A.J."/>
            <person name="Ho S.C."/>
            <person name="Haase V.H."/>
            <person name="Pillai S."/>
            <person name="Bernards A."/>
        </authorList>
    </citation>
    <scope>SUBCELLULAR LOCATION</scope>
    <scope>INTERACTION WITH CALNEXIN (ISOFORM A)</scope>
</reference>
<reference key="7">
    <citation type="journal article" date="2012" name="Pharmacol. Biochem. Behav.">
        <title>Anaplastic lymphoma kinase and leukocyte tyrosine kinase: functions and genetic interactions in learning, memory and adult neurogenesis.</title>
        <authorList>
            <person name="Weiss J.B."/>
            <person name="Xue C."/>
            <person name="Benice T."/>
            <person name="Xue L."/>
            <person name="Morris S.W."/>
            <person name="Raber J."/>
        </authorList>
    </citation>
    <scope>DISRUPTION PHENOTYPE</scope>
</reference>
<reference key="8">
    <citation type="journal article" date="2004" name="Hum. Mol. Genet.">
        <title>Gain-of-function polymorphism in mouse and human Ltk: implications for the pathogenesis of systemic lupus erythematosus.</title>
        <authorList>
            <person name="Li N."/>
            <person name="Nakamura K."/>
            <person name="Jiang Y."/>
            <person name="Tsurui H."/>
            <person name="Matsuoka S."/>
            <person name="Abe M."/>
            <person name="Ohtsuji M."/>
            <person name="Nishimura H."/>
            <person name="Kato K."/>
            <person name="Kawai T."/>
            <person name="Atsumi T."/>
            <person name="Koike T."/>
            <person name="Shirai T."/>
            <person name="Ueno H."/>
            <person name="Hirose S."/>
        </authorList>
    </citation>
    <scope>VARIANT GLU-746</scope>
    <source>
        <strain>NZB</strain>
    </source>
</reference>
<proteinExistence type="evidence at protein level"/>
<accession>P08923</accession>
<accession>A2AQ22</accession>
<feature type="signal peptide" evidence="4">
    <location>
        <begin position="1"/>
        <end position="16"/>
    </location>
</feature>
<feature type="chain" id="PRO_0000016739" description="Leukocyte tyrosine kinase receptor">
    <location>
        <begin position="17"/>
        <end position="888"/>
    </location>
</feature>
<feature type="topological domain" description="Extracellular" evidence="4">
    <location>
        <begin position="17"/>
        <end position="421"/>
    </location>
</feature>
<feature type="transmembrane region" description="Helical" evidence="4">
    <location>
        <begin position="422"/>
        <end position="446"/>
    </location>
</feature>
<feature type="topological domain" description="Cytoplasmic" evidence="4">
    <location>
        <begin position="447"/>
        <end position="888"/>
    </location>
</feature>
<feature type="domain" description="Protein kinase" evidence="5">
    <location>
        <begin position="506"/>
        <end position="782"/>
    </location>
</feature>
<feature type="region of interest" description="Disordered" evidence="7">
    <location>
        <begin position="226"/>
        <end position="294"/>
    </location>
</feature>
<feature type="region of interest" description="Disordered" evidence="7">
    <location>
        <begin position="857"/>
        <end position="888"/>
    </location>
</feature>
<feature type="compositionally biased region" description="Gly residues" evidence="7">
    <location>
        <begin position="260"/>
        <end position="273"/>
    </location>
</feature>
<feature type="compositionally biased region" description="Polar residues" evidence="7">
    <location>
        <begin position="877"/>
        <end position="888"/>
    </location>
</feature>
<feature type="active site" description="Proton acceptor" evidence="5 6">
    <location>
        <position position="639"/>
    </location>
</feature>
<feature type="binding site" evidence="5">
    <location>
        <begin position="512"/>
        <end position="520"/>
    </location>
    <ligand>
        <name>ATP</name>
        <dbReference type="ChEBI" id="CHEBI:30616"/>
    </ligand>
</feature>
<feature type="binding site" evidence="5">
    <location>
        <position position="540"/>
    </location>
    <ligand>
        <name>ATP</name>
        <dbReference type="ChEBI" id="CHEBI:30616"/>
    </ligand>
</feature>
<feature type="modified residue" description="Phosphotyrosine; by autocatalysis" evidence="1">
    <location>
        <position position="672"/>
    </location>
</feature>
<feature type="glycosylation site" description="N-linked (GlcNAc...) asparagine" evidence="4">
    <location>
        <position position="377"/>
    </location>
</feature>
<feature type="glycosylation site" description="N-linked (GlcNAc...) asparagine" evidence="4">
    <location>
        <position position="409"/>
    </location>
</feature>
<feature type="disulfide bond" evidence="2">
    <location>
        <begin position="73"/>
        <end position="86"/>
    </location>
</feature>
<feature type="disulfide bond" evidence="2">
    <location>
        <begin position="168"/>
        <end position="179"/>
    </location>
</feature>
<feature type="disulfide bond" evidence="2">
    <location>
        <begin position="297"/>
        <end position="319"/>
    </location>
</feature>
<feature type="splice variant" id="VSP_002950" description="In isoform A and isoform B." evidence="13 14 15 16">
    <location>
        <begin position="1"/>
        <end position="251"/>
    </location>
</feature>
<feature type="splice variant" id="VSP_002951" description="In isoform A and isoform B." evidence="13 14 15 16">
    <original>L</original>
    <variation>M</variation>
    <location>
        <position position="252"/>
    </location>
</feature>
<feature type="splice variant" id="VSP_002952" description="In isoform A and isoform C." evidence="13 14 15 16">
    <location>
        <begin position="271"/>
        <end position="331"/>
    </location>
</feature>
<feature type="sequence variant" evidence="8">
    <original>G</original>
    <variation>E</variation>
    <location>
        <position position="746"/>
    </location>
</feature>
<feature type="sequence conflict" description="In Ref. 3; AAA39451." evidence="17" ref="3">
    <original>T</original>
    <variation>A</variation>
    <location>
        <position position="26"/>
    </location>
</feature>
<feature type="sequence conflict" description="In Ref. 3; AAA39451." evidence="17" ref="3">
    <original>V</original>
    <variation>A</variation>
    <location>
        <position position="113"/>
    </location>
</feature>
<feature type="sequence conflict" description="In Ref. 2; CAA36848 and 3; AAA39451." evidence="17" ref="2 3">
    <original>V</original>
    <variation>M</variation>
    <location>
        <position position="789"/>
    </location>
</feature>
<feature type="sequence conflict" description="In Ref. 2; CAA36848 and 3; AAA39451." evidence="17" ref="2 3">
    <original>H</original>
    <variation>Q</variation>
    <location>
        <position position="875"/>
    </location>
</feature>
<keyword id="KW-0877">Alternative promoter usage</keyword>
<keyword id="KW-0025">Alternative splicing</keyword>
<keyword id="KW-0067">ATP-binding</keyword>
<keyword id="KW-1003">Cell membrane</keyword>
<keyword id="KW-1015">Disulfide bond</keyword>
<keyword id="KW-0256">Endoplasmic reticulum</keyword>
<keyword id="KW-0325">Glycoprotein</keyword>
<keyword id="KW-0418">Kinase</keyword>
<keyword id="KW-0472">Membrane</keyword>
<keyword id="KW-0547">Nucleotide-binding</keyword>
<keyword id="KW-0597">Phosphoprotein</keyword>
<keyword id="KW-0675">Receptor</keyword>
<keyword id="KW-1185">Reference proteome</keyword>
<keyword id="KW-0732">Signal</keyword>
<keyword id="KW-0808">Transferase</keyword>
<keyword id="KW-0812">Transmembrane</keyword>
<keyword id="KW-1133">Transmembrane helix</keyword>
<keyword id="KW-0829">Tyrosine-protein kinase</keyword>
<sequence>MGCSHRLLLWLGAAGTILCSNSEFQTPFLTPSLLPVLVLNSQEQKVTPTPSKLEPASLPNPLGTRGPWVFNTCGASGRSGPTQTQCDGAYTGSSVMVTVGAAGPLKGVQLWRVPDTGQYLISAYGAAGGKGAQNHLSRAHGIFLSAVFFLRRGEPVYILVGQQGQDACPGGSPESQLVCLGESGEHATTYGTERIPGWRRWAGGGGGGGGATSIFRLRAGEPEPLLVAAGGGGRSYRRRPDRGRTQAVPERLETRAAAPGSGGRGGAAGGGSGWTSRAHSPQAGRSPREGAEGGEGCAEAWAALRWAAAGGFGGGGGACAAGGGGGGYRGGDTSESDLLWADGEDGTSFVHPSGELYLQPLAVTEGHGEVEIRKHPNCSHCPFKDCQWQAELWTAECTCPEGTELAVDNVTCMDLPTTASPLILMGAVVAALALSLLMMCAVLILVNQKCQGLWGTRLPGPELELSKLRSSAIRTAPNPYYCQVGLSPAQPWPLPPGLTEVSPANVTLLRALGHGAFGEVYEGLVTGLPGDSSPLPVAIKTLPELCSHQDELDFLMEALIISKFSHQNIVRCVGLSFRSAPRLILLELMSGGDMKSFLRHSRPHPGQLAPLTMQDLLQLAQDIAQGCHYLEENHFIHRDIAARNCLLSCSGASRVAKIGDFGMARDIYQASYYRKGGRTLLPVKWMPPEALLEGLFTSKTDSWSFGVLLWEIFSLGYMPYPGHTNQEVLDFIATGNRMDPPRNCPGPVYRIMTQCWQHQPELRPDFGSILERIQYCTQDPDVLNSPLPVEPGPILEEEEASRLGNRSLEGLRSPKPLELSSQNLKSWGGGLLGSWLPSGLKTLKPRCLQPQNIWNPTYGSWTPRGPQGEDTGIEHCNGSSSSSIPGIQ</sequence>